<accession>Q2JQ31</accession>
<keyword id="KW-0201">Cytochrome c-type biogenesis</keyword>
<keyword id="KW-0472">Membrane</keyword>
<keyword id="KW-1185">Reference proteome</keyword>
<keyword id="KW-0793">Thylakoid</keyword>
<keyword id="KW-0812">Transmembrane</keyword>
<keyword id="KW-1133">Transmembrane helix</keyword>
<protein>
    <recommendedName>
        <fullName evidence="2">Cytochrome c biogenesis protein CcsA</fullName>
    </recommendedName>
</protein>
<proteinExistence type="inferred from homology"/>
<evidence type="ECO:0000250" key="1"/>
<evidence type="ECO:0000255" key="2">
    <source>
        <dbReference type="HAMAP-Rule" id="MF_01391"/>
    </source>
</evidence>
<comment type="function">
    <text evidence="2">Required during biogenesis of c-type cytochromes (cytochrome c6 and cytochrome f) at the step of heme attachment.</text>
</comment>
<comment type="subunit">
    <text evidence="1">May interact with ccs1.</text>
</comment>
<comment type="subcellular location">
    <subcellularLocation>
        <location evidence="2">Cellular thylakoid membrane</location>
        <topology evidence="2">Multi-pass membrane protein</topology>
    </subcellularLocation>
</comment>
<comment type="similarity">
    <text evidence="2">Belongs to the CcmF/CycK/Ccl1/NrfE/CcsA family.</text>
</comment>
<feature type="chain" id="PRO_0000353719" description="Cytochrome c biogenesis protein CcsA">
    <location>
        <begin position="1"/>
        <end position="350"/>
    </location>
</feature>
<feature type="transmembrane region" description="Helical" evidence="2">
    <location>
        <begin position="23"/>
        <end position="43"/>
    </location>
</feature>
<feature type="transmembrane region" description="Helical" evidence="2">
    <location>
        <begin position="47"/>
        <end position="67"/>
    </location>
</feature>
<feature type="transmembrane region" description="Helical" evidence="2">
    <location>
        <begin position="82"/>
        <end position="102"/>
    </location>
</feature>
<feature type="transmembrane region" description="Helical" evidence="2">
    <location>
        <begin position="108"/>
        <end position="128"/>
    </location>
</feature>
<feature type="transmembrane region" description="Helical" evidence="2">
    <location>
        <begin position="153"/>
        <end position="173"/>
    </location>
</feature>
<feature type="transmembrane region" description="Helical" evidence="2">
    <location>
        <begin position="258"/>
        <end position="278"/>
    </location>
</feature>
<feature type="transmembrane region" description="Helical" evidence="2">
    <location>
        <begin position="293"/>
        <end position="313"/>
    </location>
</feature>
<feature type="transmembrane region" description="Helical" evidence="2">
    <location>
        <begin position="319"/>
        <end position="339"/>
    </location>
</feature>
<organism>
    <name type="scientific">Synechococcus sp. (strain JA-2-3B'a(2-13))</name>
    <name type="common">Cyanobacteria bacterium Yellowstone B-Prime</name>
    <dbReference type="NCBI Taxonomy" id="321332"/>
    <lineage>
        <taxon>Bacteria</taxon>
        <taxon>Bacillati</taxon>
        <taxon>Cyanobacteriota</taxon>
        <taxon>Cyanophyceae</taxon>
        <taxon>Synechococcales</taxon>
        <taxon>Synechococcaceae</taxon>
        <taxon>Synechococcus</taxon>
    </lineage>
</organism>
<gene>
    <name evidence="2" type="primary">ccsA</name>
    <name type="ordered locus">CYB_0084</name>
</gene>
<dbReference type="EMBL" id="CP000240">
    <property type="protein sequence ID" value="ABD01085.1"/>
    <property type="molecule type" value="Genomic_DNA"/>
</dbReference>
<dbReference type="SMR" id="Q2JQ31"/>
<dbReference type="STRING" id="321332.CYB_0084"/>
<dbReference type="KEGG" id="cyb:CYB_0084"/>
<dbReference type="eggNOG" id="COG0755">
    <property type="taxonomic scope" value="Bacteria"/>
</dbReference>
<dbReference type="HOGENOM" id="CLU_049710_2_4_3"/>
<dbReference type="OrthoDB" id="9814290at2"/>
<dbReference type="Proteomes" id="UP000001938">
    <property type="component" value="Chromosome"/>
</dbReference>
<dbReference type="GO" id="GO:0031676">
    <property type="term" value="C:plasma membrane-derived thylakoid membrane"/>
    <property type="evidence" value="ECO:0007669"/>
    <property type="project" value="UniProtKB-SubCell"/>
</dbReference>
<dbReference type="GO" id="GO:0020037">
    <property type="term" value="F:heme binding"/>
    <property type="evidence" value="ECO:0007669"/>
    <property type="project" value="InterPro"/>
</dbReference>
<dbReference type="GO" id="GO:0017004">
    <property type="term" value="P:cytochrome complex assembly"/>
    <property type="evidence" value="ECO:0007669"/>
    <property type="project" value="UniProtKB-UniRule"/>
</dbReference>
<dbReference type="HAMAP" id="MF_01391">
    <property type="entry name" value="CytC_CcsA"/>
    <property type="match status" value="1"/>
</dbReference>
<dbReference type="InterPro" id="IPR002541">
    <property type="entry name" value="Cyt_c_assembly"/>
</dbReference>
<dbReference type="InterPro" id="IPR017562">
    <property type="entry name" value="Cyt_c_biogenesis_CcsA"/>
</dbReference>
<dbReference type="InterPro" id="IPR045062">
    <property type="entry name" value="Cyt_c_biogenesis_CcsA/CcmC"/>
</dbReference>
<dbReference type="NCBIfam" id="TIGR03144">
    <property type="entry name" value="cytochr_II_ccsB"/>
    <property type="match status" value="1"/>
</dbReference>
<dbReference type="PANTHER" id="PTHR30071:SF1">
    <property type="entry name" value="CYTOCHROME B_B6 PROTEIN-RELATED"/>
    <property type="match status" value="1"/>
</dbReference>
<dbReference type="PANTHER" id="PTHR30071">
    <property type="entry name" value="HEME EXPORTER PROTEIN C"/>
    <property type="match status" value="1"/>
</dbReference>
<dbReference type="Pfam" id="PF01578">
    <property type="entry name" value="Cytochrom_C_asm"/>
    <property type="match status" value="1"/>
</dbReference>
<reference key="1">
    <citation type="journal article" date="2007" name="ISME J.">
        <title>Population level functional diversity in a microbial community revealed by comparative genomic and metagenomic analyses.</title>
        <authorList>
            <person name="Bhaya D."/>
            <person name="Grossman A.R."/>
            <person name="Steunou A.-S."/>
            <person name="Khuri N."/>
            <person name="Cohan F.M."/>
            <person name="Hamamura N."/>
            <person name="Melendrez M.C."/>
            <person name="Bateson M.M."/>
            <person name="Ward D.M."/>
            <person name="Heidelberg J.F."/>
        </authorList>
    </citation>
    <scope>NUCLEOTIDE SEQUENCE [LARGE SCALE GENOMIC DNA]</scope>
    <source>
        <strain>JA-2-3B'a(2-13)</strain>
    </source>
</reference>
<sequence length="350" mass="38192">MALLAITALAGMDLAQWQALLNNVAFAISLGAMLFYWGGAAFPQMQLLAELGLAGMIGANLTMAALLTARWIDAGYFPLSNLYESLFFLAWGITALHLLALHWSRSRWVGVMTAPVVTGIVAFAALVLPEDMQVAQPLVPALQSNWLMMHVTVMLLAYAALLVGSLLSISFLIVTRGQEVHLKGNSLGLQFRPPQPQTHPEWAEATLPSPASELAYAGLRSPRPAPSSAELPPQPAPEGIPWQRLSLAEILDNTSYRLIGLGFPLLTIGIIAGAVWANEAWGTYWSWDPKETWALITWLVFAAYLHARITKGWQGRRPALLASLGFGVVWVCYLGVNFLGKGLHSYGWFF</sequence>
<name>CCSA_SYNJB</name>